<feature type="chain" id="PRO_0000209912" description="Ectonucleoside triphosphate diphosphohydrolase 4">
    <location>
        <begin position="1"/>
        <end position="613"/>
    </location>
</feature>
<feature type="topological domain" description="Cytoplasmic" evidence="3">
    <location>
        <begin position="1"/>
        <end position="33"/>
    </location>
</feature>
<feature type="transmembrane region" description="Helical" evidence="3">
    <location>
        <begin position="34"/>
        <end position="54"/>
    </location>
</feature>
<feature type="topological domain" description="Lumenal" evidence="2">
    <location>
        <begin position="55"/>
        <end position="559"/>
    </location>
</feature>
<feature type="transmembrane region" description="Helical" evidence="3">
    <location>
        <begin position="560"/>
        <end position="580"/>
    </location>
</feature>
<feature type="topological domain" description="Cytoplasmic" evidence="3">
    <location>
        <begin position="581"/>
        <end position="613"/>
    </location>
</feature>
<feature type="active site" description="Proton acceptor" evidence="1">
    <location>
        <position position="222"/>
    </location>
</feature>
<feature type="glycosylation site" description="N-linked (GlcNAc...) asparagine" evidence="3">
    <location>
        <position position="404"/>
    </location>
</feature>
<feature type="glycosylation site" description="N-linked (GlcNAc...) asparagine" evidence="3">
    <location>
        <position position="407"/>
    </location>
</feature>
<feature type="disulfide bond" evidence="2">
    <location>
        <begin position="368"/>
        <end position="395"/>
    </location>
</feature>
<feature type="disulfide bond" evidence="2">
    <location>
        <begin position="461"/>
        <end position="490"/>
    </location>
</feature>
<feature type="splice variant" id="VSP_003615" description="In isoform 2." evidence="6">
    <location>
        <begin position="287"/>
        <end position="294"/>
    </location>
</feature>
<keyword id="KW-0025">Alternative splicing</keyword>
<keyword id="KW-0106">Calcium</keyword>
<keyword id="KW-0968">Cytoplasmic vesicle</keyword>
<keyword id="KW-1015">Disulfide bond</keyword>
<keyword id="KW-0325">Glycoprotein</keyword>
<keyword id="KW-0333">Golgi apparatus</keyword>
<keyword id="KW-0378">Hydrolase</keyword>
<keyword id="KW-0458">Lysosome</keyword>
<keyword id="KW-0460">Magnesium</keyword>
<keyword id="KW-0472">Membrane</keyword>
<keyword id="KW-1185">Reference proteome</keyword>
<keyword id="KW-0812">Transmembrane</keyword>
<keyword id="KW-1133">Transmembrane helix</keyword>
<proteinExistence type="evidence at protein level"/>
<reference key="1">
    <citation type="journal article" date="2005" name="Science">
        <title>The transcriptional landscape of the mammalian genome.</title>
        <authorList>
            <person name="Carninci P."/>
            <person name="Kasukawa T."/>
            <person name="Katayama S."/>
            <person name="Gough J."/>
            <person name="Frith M.C."/>
            <person name="Maeda N."/>
            <person name="Oyama R."/>
            <person name="Ravasi T."/>
            <person name="Lenhard B."/>
            <person name="Wells C."/>
            <person name="Kodzius R."/>
            <person name="Shimokawa K."/>
            <person name="Bajic V.B."/>
            <person name="Brenner S.E."/>
            <person name="Batalov S."/>
            <person name="Forrest A.R."/>
            <person name="Zavolan M."/>
            <person name="Davis M.J."/>
            <person name="Wilming L.G."/>
            <person name="Aidinis V."/>
            <person name="Allen J.E."/>
            <person name="Ambesi-Impiombato A."/>
            <person name="Apweiler R."/>
            <person name="Aturaliya R.N."/>
            <person name="Bailey T.L."/>
            <person name="Bansal M."/>
            <person name="Baxter L."/>
            <person name="Beisel K.W."/>
            <person name="Bersano T."/>
            <person name="Bono H."/>
            <person name="Chalk A.M."/>
            <person name="Chiu K.P."/>
            <person name="Choudhary V."/>
            <person name="Christoffels A."/>
            <person name="Clutterbuck D.R."/>
            <person name="Crowe M.L."/>
            <person name="Dalla E."/>
            <person name="Dalrymple B.P."/>
            <person name="de Bono B."/>
            <person name="Della Gatta G."/>
            <person name="di Bernardo D."/>
            <person name="Down T."/>
            <person name="Engstrom P."/>
            <person name="Fagiolini M."/>
            <person name="Faulkner G."/>
            <person name="Fletcher C.F."/>
            <person name="Fukushima T."/>
            <person name="Furuno M."/>
            <person name="Futaki S."/>
            <person name="Gariboldi M."/>
            <person name="Georgii-Hemming P."/>
            <person name="Gingeras T.R."/>
            <person name="Gojobori T."/>
            <person name="Green R.E."/>
            <person name="Gustincich S."/>
            <person name="Harbers M."/>
            <person name="Hayashi Y."/>
            <person name="Hensch T.K."/>
            <person name="Hirokawa N."/>
            <person name="Hill D."/>
            <person name="Huminiecki L."/>
            <person name="Iacono M."/>
            <person name="Ikeo K."/>
            <person name="Iwama A."/>
            <person name="Ishikawa T."/>
            <person name="Jakt M."/>
            <person name="Kanapin A."/>
            <person name="Katoh M."/>
            <person name="Kawasawa Y."/>
            <person name="Kelso J."/>
            <person name="Kitamura H."/>
            <person name="Kitano H."/>
            <person name="Kollias G."/>
            <person name="Krishnan S.P."/>
            <person name="Kruger A."/>
            <person name="Kummerfeld S.K."/>
            <person name="Kurochkin I.V."/>
            <person name="Lareau L.F."/>
            <person name="Lazarevic D."/>
            <person name="Lipovich L."/>
            <person name="Liu J."/>
            <person name="Liuni S."/>
            <person name="McWilliam S."/>
            <person name="Madan Babu M."/>
            <person name="Madera M."/>
            <person name="Marchionni L."/>
            <person name="Matsuda H."/>
            <person name="Matsuzawa S."/>
            <person name="Miki H."/>
            <person name="Mignone F."/>
            <person name="Miyake S."/>
            <person name="Morris K."/>
            <person name="Mottagui-Tabar S."/>
            <person name="Mulder N."/>
            <person name="Nakano N."/>
            <person name="Nakauchi H."/>
            <person name="Ng P."/>
            <person name="Nilsson R."/>
            <person name="Nishiguchi S."/>
            <person name="Nishikawa S."/>
            <person name="Nori F."/>
            <person name="Ohara O."/>
            <person name="Okazaki Y."/>
            <person name="Orlando V."/>
            <person name="Pang K.C."/>
            <person name="Pavan W.J."/>
            <person name="Pavesi G."/>
            <person name="Pesole G."/>
            <person name="Petrovsky N."/>
            <person name="Piazza S."/>
            <person name="Reed J."/>
            <person name="Reid J.F."/>
            <person name="Ring B.Z."/>
            <person name="Ringwald M."/>
            <person name="Rost B."/>
            <person name="Ruan Y."/>
            <person name="Salzberg S.L."/>
            <person name="Sandelin A."/>
            <person name="Schneider C."/>
            <person name="Schoenbach C."/>
            <person name="Sekiguchi K."/>
            <person name="Semple C.A."/>
            <person name="Seno S."/>
            <person name="Sessa L."/>
            <person name="Sheng Y."/>
            <person name="Shibata Y."/>
            <person name="Shimada H."/>
            <person name="Shimada K."/>
            <person name="Silva D."/>
            <person name="Sinclair B."/>
            <person name="Sperling S."/>
            <person name="Stupka E."/>
            <person name="Sugiura K."/>
            <person name="Sultana R."/>
            <person name="Takenaka Y."/>
            <person name="Taki K."/>
            <person name="Tammoja K."/>
            <person name="Tan S.L."/>
            <person name="Tang S."/>
            <person name="Taylor M.S."/>
            <person name="Tegner J."/>
            <person name="Teichmann S.A."/>
            <person name="Ueda H.R."/>
            <person name="van Nimwegen E."/>
            <person name="Verardo R."/>
            <person name="Wei C.L."/>
            <person name="Yagi K."/>
            <person name="Yamanishi H."/>
            <person name="Zabarovsky E."/>
            <person name="Zhu S."/>
            <person name="Zimmer A."/>
            <person name="Hide W."/>
            <person name="Bult C."/>
            <person name="Grimmond S.M."/>
            <person name="Teasdale R.D."/>
            <person name="Liu E.T."/>
            <person name="Brusic V."/>
            <person name="Quackenbush J."/>
            <person name="Wahlestedt C."/>
            <person name="Mattick J.S."/>
            <person name="Hume D.A."/>
            <person name="Kai C."/>
            <person name="Sasaki D."/>
            <person name="Tomaru Y."/>
            <person name="Fukuda S."/>
            <person name="Kanamori-Katayama M."/>
            <person name="Suzuki M."/>
            <person name="Aoki J."/>
            <person name="Arakawa T."/>
            <person name="Iida J."/>
            <person name="Imamura K."/>
            <person name="Itoh M."/>
            <person name="Kato T."/>
            <person name="Kawaji H."/>
            <person name="Kawagashira N."/>
            <person name="Kawashima T."/>
            <person name="Kojima M."/>
            <person name="Kondo S."/>
            <person name="Konno H."/>
            <person name="Nakano K."/>
            <person name="Ninomiya N."/>
            <person name="Nishio T."/>
            <person name="Okada M."/>
            <person name="Plessy C."/>
            <person name="Shibata K."/>
            <person name="Shiraki T."/>
            <person name="Suzuki S."/>
            <person name="Tagami M."/>
            <person name="Waki K."/>
            <person name="Watahiki A."/>
            <person name="Okamura-Oho Y."/>
            <person name="Suzuki H."/>
            <person name="Kawai J."/>
            <person name="Hayashizaki Y."/>
        </authorList>
    </citation>
    <scope>NUCLEOTIDE SEQUENCE [LARGE SCALE MRNA] (ISOFORM 1)</scope>
    <source>
        <strain>C57BL/6J</strain>
        <tissue>Lung</tissue>
    </source>
</reference>
<reference key="2">
    <citation type="journal article" date="2004" name="Genome Res.">
        <title>The status, quality, and expansion of the NIH full-length cDNA project: the Mammalian Gene Collection (MGC).</title>
        <authorList>
            <consortium name="The MGC Project Team"/>
        </authorList>
    </citation>
    <scope>NUCLEOTIDE SEQUENCE [LARGE SCALE MRNA] (ISOFORMS 1 AND 2)</scope>
    <source>
        <tissue>Brain</tissue>
        <tissue>Mammary gland</tissue>
    </source>
</reference>
<reference key="3">
    <citation type="journal article" date="2000" name="J. Biol. Chem.">
        <title>First apyrase splice variants have different enzymatic properties.</title>
        <authorList>
            <person name="Biederbick A."/>
            <person name="Kosan C."/>
            <person name="Kunz J."/>
            <person name="Elsaesser H.-P."/>
        </authorList>
    </citation>
    <scope>ALTERNATIVE SPLICING</scope>
    <scope>TISSUE SPECIFICITY</scope>
</reference>
<reference key="4">
    <citation type="journal article" date="2010" name="Cell">
        <title>A tissue-specific atlas of mouse protein phosphorylation and expression.</title>
        <authorList>
            <person name="Huttlin E.L."/>
            <person name="Jedrychowski M.P."/>
            <person name="Elias J.E."/>
            <person name="Goswami T."/>
            <person name="Rad R."/>
            <person name="Beausoleil S.A."/>
            <person name="Villen J."/>
            <person name="Haas W."/>
            <person name="Sowa M.E."/>
            <person name="Gygi S.P."/>
        </authorList>
    </citation>
    <scope>IDENTIFICATION BY MASS SPECTROMETRY [LARGE SCALE ANALYSIS]</scope>
    <source>
        <tissue>Brown adipose tissue</tissue>
    </source>
</reference>
<name>ENTP4_MOUSE</name>
<comment type="function">
    <molecule>Isoform 1</molecule>
    <text evidence="2">Catalyzes the hydrolysis of nucleoside triphosphates and diphosphates in a calcium- or magnesium-dependent manner, with a preference for pyrimidines. Preferentially hydrolyzes UTP and TTP on UTP and TTP. AMP, ADP, ATP and UMP are not substrates. Preferentially activated by Ca(2+) over Mg(2+).</text>
</comment>
<comment type="function">
    <molecule>Isoform 2</molecule>
    <text evidence="2">Has a broad substrate specificity with the ability of cleaving all nucleotide di- and triphosphates with the exception of adenosine di- and triphosphate (ADP and ATP). Preferentially hydrolyzes CTP, UDP, CDP, GTP and GDP. Can use either Ca(2+) or Mg(2+) equally.</text>
</comment>
<comment type="catalytic activity">
    <reaction evidence="2">
        <text>a ribonucleoside 5'-triphosphate + H2O = a ribonucleoside 5'-diphosphate + phosphate + H(+)</text>
        <dbReference type="Rhea" id="RHEA:23680"/>
        <dbReference type="ChEBI" id="CHEBI:15377"/>
        <dbReference type="ChEBI" id="CHEBI:15378"/>
        <dbReference type="ChEBI" id="CHEBI:43474"/>
        <dbReference type="ChEBI" id="CHEBI:57930"/>
        <dbReference type="ChEBI" id="CHEBI:61557"/>
        <dbReference type="EC" id="3.6.1.15"/>
    </reaction>
    <physiologicalReaction direction="left-to-right" evidence="2">
        <dbReference type="Rhea" id="RHEA:23681"/>
    </physiologicalReaction>
</comment>
<comment type="catalytic activity">
    <reaction evidence="2">
        <text>a ribonucleoside 5'-diphosphate + H2O = a ribonucleoside 5'-phosphate + phosphate + H(+)</text>
        <dbReference type="Rhea" id="RHEA:36799"/>
        <dbReference type="ChEBI" id="CHEBI:15377"/>
        <dbReference type="ChEBI" id="CHEBI:15378"/>
        <dbReference type="ChEBI" id="CHEBI:43474"/>
        <dbReference type="ChEBI" id="CHEBI:57930"/>
        <dbReference type="ChEBI" id="CHEBI:58043"/>
        <dbReference type="EC" id="3.6.1.6"/>
    </reaction>
    <physiologicalReaction direction="left-to-right" evidence="2">
        <dbReference type="Rhea" id="RHEA:36800"/>
    </physiologicalReaction>
</comment>
<comment type="catalytic activity">
    <reaction evidence="2">
        <text>UDP + H2O = UMP + phosphate + H(+)</text>
        <dbReference type="Rhea" id="RHEA:64876"/>
        <dbReference type="ChEBI" id="CHEBI:15377"/>
        <dbReference type="ChEBI" id="CHEBI:15378"/>
        <dbReference type="ChEBI" id="CHEBI:43474"/>
        <dbReference type="ChEBI" id="CHEBI:57865"/>
        <dbReference type="ChEBI" id="CHEBI:58223"/>
        <dbReference type="EC" id="3.6.1.6"/>
    </reaction>
    <physiologicalReaction direction="left-to-right" evidence="2">
        <dbReference type="Rhea" id="RHEA:64877"/>
    </physiologicalReaction>
</comment>
<comment type="catalytic activity">
    <reaction evidence="2">
        <text>UTP + H2O = UDP + phosphate + H(+)</text>
        <dbReference type="Rhea" id="RHEA:64900"/>
        <dbReference type="ChEBI" id="CHEBI:15377"/>
        <dbReference type="ChEBI" id="CHEBI:15378"/>
        <dbReference type="ChEBI" id="CHEBI:43474"/>
        <dbReference type="ChEBI" id="CHEBI:46398"/>
        <dbReference type="ChEBI" id="CHEBI:58223"/>
    </reaction>
    <physiologicalReaction direction="left-to-right" evidence="2">
        <dbReference type="Rhea" id="RHEA:64901"/>
    </physiologicalReaction>
</comment>
<comment type="catalytic activity">
    <reaction evidence="2">
        <text>CTP + H2O = CDP + phosphate + H(+)</text>
        <dbReference type="Rhea" id="RHEA:29387"/>
        <dbReference type="ChEBI" id="CHEBI:15377"/>
        <dbReference type="ChEBI" id="CHEBI:15378"/>
        <dbReference type="ChEBI" id="CHEBI:37563"/>
        <dbReference type="ChEBI" id="CHEBI:43474"/>
        <dbReference type="ChEBI" id="CHEBI:58069"/>
    </reaction>
    <physiologicalReaction direction="left-to-right" evidence="2">
        <dbReference type="Rhea" id="RHEA:29388"/>
    </physiologicalReaction>
</comment>
<comment type="catalytic activity">
    <reaction evidence="2">
        <text>GDP + H2O = GMP + phosphate + H(+)</text>
        <dbReference type="Rhea" id="RHEA:22156"/>
        <dbReference type="ChEBI" id="CHEBI:15377"/>
        <dbReference type="ChEBI" id="CHEBI:15378"/>
        <dbReference type="ChEBI" id="CHEBI:43474"/>
        <dbReference type="ChEBI" id="CHEBI:58115"/>
        <dbReference type="ChEBI" id="CHEBI:58189"/>
        <dbReference type="EC" id="3.6.1.42"/>
    </reaction>
    <physiologicalReaction direction="left-to-right" evidence="2">
        <dbReference type="Rhea" id="RHEA:22157"/>
    </physiologicalReaction>
</comment>
<comment type="catalytic activity">
    <reaction evidence="2">
        <text>5-methyl-UTP + H2O = 5-methyl-UDP + phosphate + H(+)</text>
        <dbReference type="Rhea" id="RHEA:65580"/>
        <dbReference type="ChEBI" id="CHEBI:15377"/>
        <dbReference type="ChEBI" id="CHEBI:15378"/>
        <dbReference type="ChEBI" id="CHEBI:43474"/>
        <dbReference type="ChEBI" id="CHEBI:61417"/>
        <dbReference type="ChEBI" id="CHEBI:63527"/>
    </reaction>
    <physiologicalReaction direction="left-to-right" evidence="2">
        <dbReference type="Rhea" id="RHEA:65581"/>
    </physiologicalReaction>
</comment>
<comment type="cofactor">
    <cofactor evidence="2">
        <name>Ca(2+)</name>
        <dbReference type="ChEBI" id="CHEBI:29108"/>
    </cofactor>
    <cofactor evidence="2">
        <name>Mg(2+)</name>
        <dbReference type="ChEBI" id="CHEBI:18420"/>
    </cofactor>
</comment>
<comment type="subcellular location">
    <molecule>Isoform 1</molecule>
    <subcellularLocation>
        <location evidence="2">Cytoplasmic vesicle</location>
        <location evidence="2">Autophagosome membrane</location>
        <topology evidence="2">Multi-pass membrane protein</topology>
    </subcellularLocation>
    <subcellularLocation>
        <location evidence="2">Lysosome membrane</location>
        <topology evidence="2">Multi-pass membrane protein</topology>
    </subcellularLocation>
</comment>
<comment type="subcellular location">
    <molecule>Isoform 2</molecule>
    <subcellularLocation>
        <location evidence="2">Golgi apparatus membrane</location>
        <topology evidence="3">Multi-pass membrane protein</topology>
    </subcellularLocation>
</comment>
<comment type="alternative products">
    <event type="alternative splicing"/>
    <isoform>
        <id>Q9DBT4-1</id>
        <name>1</name>
        <name evidence="5">LALP70</name>
        <sequence type="displayed"/>
    </isoform>
    <isoform>
        <id>Q9DBT4-2</id>
        <name>2</name>
        <name evidence="5">LALP70V</name>
        <sequence type="described" ref="VSP_003615"/>
    </isoform>
</comment>
<comment type="tissue specificity">
    <text evidence="4">Ubiquitous.</text>
</comment>
<comment type="similarity">
    <text evidence="7">Belongs to the GDA1/CD39 NTPase family.</text>
</comment>
<accession>Q9DBT4</accession>
<gene>
    <name type="primary">Entpd4</name>
    <name type="synonym">Lalp70</name>
    <name type="synonym">Lysal1</name>
</gene>
<organism>
    <name type="scientific">Mus musculus</name>
    <name type="common">Mouse</name>
    <dbReference type="NCBI Taxonomy" id="10090"/>
    <lineage>
        <taxon>Eukaryota</taxon>
        <taxon>Metazoa</taxon>
        <taxon>Chordata</taxon>
        <taxon>Craniata</taxon>
        <taxon>Vertebrata</taxon>
        <taxon>Euteleostomi</taxon>
        <taxon>Mammalia</taxon>
        <taxon>Eutheria</taxon>
        <taxon>Euarchontoglires</taxon>
        <taxon>Glires</taxon>
        <taxon>Rodentia</taxon>
        <taxon>Myomorpha</taxon>
        <taxon>Muroidea</taxon>
        <taxon>Muridae</taxon>
        <taxon>Murinae</taxon>
        <taxon>Mus</taxon>
        <taxon>Mus</taxon>
    </lineage>
</organism>
<evidence type="ECO:0000250" key="1">
    <source>
        <dbReference type="UniProtKB" id="O35795"/>
    </source>
</evidence>
<evidence type="ECO:0000250" key="2">
    <source>
        <dbReference type="UniProtKB" id="Q9Y227"/>
    </source>
</evidence>
<evidence type="ECO:0000255" key="3"/>
<evidence type="ECO:0000269" key="4">
    <source>
    </source>
</evidence>
<evidence type="ECO:0000303" key="5">
    <source>
    </source>
</evidence>
<evidence type="ECO:0000303" key="6">
    <source>
    </source>
</evidence>
<evidence type="ECO:0000305" key="7"/>
<dbReference type="EC" id="3.6.1.15" evidence="2"/>
<dbReference type="EC" id="3.6.1.6" evidence="2"/>
<dbReference type="EC" id="3.6.1.42" evidence="2"/>
<dbReference type="EMBL" id="AK004761">
    <property type="protein sequence ID" value="BAB23542.1"/>
    <property type="molecule type" value="mRNA"/>
</dbReference>
<dbReference type="EMBL" id="BC006924">
    <property type="protein sequence ID" value="AAH06924.1"/>
    <property type="molecule type" value="mRNA"/>
</dbReference>
<dbReference type="EMBL" id="BC043134">
    <property type="protein sequence ID" value="AAH43134.1"/>
    <property type="molecule type" value="mRNA"/>
</dbReference>
<dbReference type="CCDS" id="CCDS27240.1">
    <molecule id="Q9DBT4-1"/>
</dbReference>
<dbReference type="RefSeq" id="NP_001347281.1">
    <molecule id="Q9DBT4-2"/>
    <property type="nucleotide sequence ID" value="NM_001360352.1"/>
</dbReference>
<dbReference type="RefSeq" id="NP_080450.1">
    <molecule id="Q9DBT4-1"/>
    <property type="nucleotide sequence ID" value="NM_026174.3"/>
</dbReference>
<dbReference type="RefSeq" id="XP_003688976.1">
    <property type="nucleotide sequence ID" value="XM_003688928.3"/>
</dbReference>
<dbReference type="RefSeq" id="XP_003688977.1">
    <property type="nucleotide sequence ID" value="XM_003688929.4"/>
</dbReference>
<dbReference type="RefSeq" id="XP_006519516.1">
    <property type="nucleotide sequence ID" value="XM_006519453.2"/>
</dbReference>
<dbReference type="SMR" id="Q9DBT4"/>
<dbReference type="BioGRID" id="212206">
    <property type="interactions" value="1"/>
</dbReference>
<dbReference type="FunCoup" id="Q9DBT4">
    <property type="interactions" value="658"/>
</dbReference>
<dbReference type="STRING" id="10090.ENSMUSP00000138944"/>
<dbReference type="GlyCosmos" id="Q9DBT4">
    <property type="glycosylation" value="2 sites, No reported glycans"/>
</dbReference>
<dbReference type="GlyGen" id="Q9DBT4">
    <property type="glycosylation" value="2 sites"/>
</dbReference>
<dbReference type="PhosphoSitePlus" id="Q9DBT4"/>
<dbReference type="SwissPalm" id="Q9DBT4"/>
<dbReference type="PaxDb" id="10090-ENSMUSP00000138944"/>
<dbReference type="ProteomicsDB" id="275458">
    <molecule id="Q9DBT4-1"/>
</dbReference>
<dbReference type="ProteomicsDB" id="275459">
    <molecule id="Q9DBT4-2"/>
</dbReference>
<dbReference type="DNASU" id="67464"/>
<dbReference type="Ensembl" id="ENSMUST00000064831.6">
    <molecule id="Q9DBT4-1"/>
    <property type="protein sequence ID" value="ENSMUSP00000065046.6"/>
    <property type="gene ID" value="ENSMUSG00000095463.9"/>
</dbReference>
<dbReference type="Ensembl" id="ENSMUST00000184973.8">
    <molecule id="Q9DBT4-1"/>
    <property type="protein sequence ID" value="ENSMUSP00000138944.2"/>
    <property type="gene ID" value="ENSMUSG00000095463.9"/>
</dbReference>
<dbReference type="Ensembl" id="ENSMUST00000185072.8">
    <molecule id="Q9DBT4-1"/>
    <property type="protein sequence ID" value="ENSMUSP00000139202.2"/>
    <property type="gene ID" value="ENSMUSG00000022066.17"/>
</dbReference>
<dbReference type="GeneID" id="67464"/>
<dbReference type="KEGG" id="mmu:67464"/>
<dbReference type="UCSC" id="uc007umi.2">
    <molecule id="Q9DBT4-1"/>
    <property type="organism name" value="mouse"/>
</dbReference>
<dbReference type="UCSC" id="uc007umk.2">
    <molecule id="Q9DBT4-2"/>
    <property type="organism name" value="mouse"/>
</dbReference>
<dbReference type="AGR" id="MGI:1914714"/>
<dbReference type="CTD" id="9583"/>
<dbReference type="MGI" id="MGI:1914714">
    <property type="gene designation" value="Entpd4"/>
</dbReference>
<dbReference type="VEuPathDB" id="HostDB:ENSMUSG00000022066"/>
<dbReference type="VEuPathDB" id="HostDB:ENSMUSG00000095463"/>
<dbReference type="eggNOG" id="KOG1386">
    <property type="taxonomic scope" value="Eukaryota"/>
</dbReference>
<dbReference type="GeneTree" id="ENSGT01110000267240"/>
<dbReference type="HOGENOM" id="CLU_010246_6_0_1"/>
<dbReference type="InParanoid" id="Q9DBT4"/>
<dbReference type="OMA" id="ENPFHRH"/>
<dbReference type="OrthoDB" id="6372431at2759"/>
<dbReference type="PhylomeDB" id="Q9DBT4"/>
<dbReference type="TreeFam" id="TF354343"/>
<dbReference type="Reactome" id="R-MMU-8850843">
    <property type="pathway name" value="Phosphate bond hydrolysis by NTPDase proteins"/>
</dbReference>
<dbReference type="BioGRID-ORCS" id="100862375">
    <property type="hits" value="0 hits in 6 CRISPR screens"/>
</dbReference>
<dbReference type="BioGRID-ORCS" id="67464">
    <property type="hits" value="0 hits in 43 CRISPR screens"/>
</dbReference>
<dbReference type="ChiTaRS" id="Entpd4">
    <property type="organism name" value="mouse"/>
</dbReference>
<dbReference type="PRO" id="PR:Q9DBT4"/>
<dbReference type="Proteomes" id="UP000000589">
    <property type="component" value="Chromosome 14"/>
</dbReference>
<dbReference type="RNAct" id="Q9DBT4">
    <property type="molecule type" value="protein"/>
</dbReference>
<dbReference type="Bgee" id="ENSMUSG00000022066">
    <property type="expression patterns" value="Expressed in proximal tubule and 58 other cell types or tissues"/>
</dbReference>
<dbReference type="ExpressionAtlas" id="Q9DBT4">
    <property type="expression patterns" value="baseline"/>
</dbReference>
<dbReference type="GO" id="GO:0000421">
    <property type="term" value="C:autophagosome membrane"/>
    <property type="evidence" value="ECO:0000250"/>
    <property type="project" value="UniProtKB"/>
</dbReference>
<dbReference type="GO" id="GO:0031410">
    <property type="term" value="C:cytoplasmic vesicle"/>
    <property type="evidence" value="ECO:0007669"/>
    <property type="project" value="UniProtKB-KW"/>
</dbReference>
<dbReference type="GO" id="GO:0000139">
    <property type="term" value="C:Golgi membrane"/>
    <property type="evidence" value="ECO:0000250"/>
    <property type="project" value="UniProtKB"/>
</dbReference>
<dbReference type="GO" id="GO:0005765">
    <property type="term" value="C:lysosomal membrane"/>
    <property type="evidence" value="ECO:0007669"/>
    <property type="project" value="UniProtKB-SubCell"/>
</dbReference>
<dbReference type="GO" id="GO:0036384">
    <property type="term" value="F:CDP phosphatase activity"/>
    <property type="evidence" value="ECO:0000250"/>
    <property type="project" value="UniProtKB"/>
</dbReference>
<dbReference type="GO" id="GO:0043273">
    <property type="term" value="F:CTPase activity"/>
    <property type="evidence" value="ECO:0000250"/>
    <property type="project" value="UniProtKB"/>
</dbReference>
<dbReference type="GO" id="GO:0004382">
    <property type="term" value="F:GDP phosphatase activity"/>
    <property type="evidence" value="ECO:0000250"/>
    <property type="project" value="UniProtKB"/>
</dbReference>
<dbReference type="GO" id="GO:0017110">
    <property type="term" value="F:nucleoside diphosphate phosphatase activity"/>
    <property type="evidence" value="ECO:0000250"/>
    <property type="project" value="UniProtKB"/>
</dbReference>
<dbReference type="GO" id="GO:0017111">
    <property type="term" value="F:ribonucleoside triphosphate phosphatase activity"/>
    <property type="evidence" value="ECO:0000250"/>
    <property type="project" value="UniProtKB"/>
</dbReference>
<dbReference type="GO" id="GO:0045134">
    <property type="term" value="F:UDP phosphatase activity"/>
    <property type="evidence" value="ECO:0000250"/>
    <property type="project" value="UniProtKB"/>
</dbReference>
<dbReference type="GO" id="GO:0046036">
    <property type="term" value="P:CTP metabolic process"/>
    <property type="evidence" value="ECO:0000250"/>
    <property type="project" value="UniProtKB"/>
</dbReference>
<dbReference type="GO" id="GO:0046712">
    <property type="term" value="P:GDP catabolic process"/>
    <property type="evidence" value="ECO:0000250"/>
    <property type="project" value="UniProtKB"/>
</dbReference>
<dbReference type="GO" id="GO:0034656">
    <property type="term" value="P:nucleobase-containing small molecule catabolic process"/>
    <property type="evidence" value="ECO:0000250"/>
    <property type="project" value="UniProtKB"/>
</dbReference>
<dbReference type="GO" id="GO:0006256">
    <property type="term" value="P:UDP catabolic process"/>
    <property type="evidence" value="ECO:0000250"/>
    <property type="project" value="UniProtKB"/>
</dbReference>
<dbReference type="CDD" id="cd24045">
    <property type="entry name" value="ASKHA_NBD_NTPDase4-like"/>
    <property type="match status" value="1"/>
</dbReference>
<dbReference type="FunFam" id="3.30.420.40:FF:000057">
    <property type="entry name" value="Ectonucleoside triphosphate diphosphohydrolase 4"/>
    <property type="match status" value="1"/>
</dbReference>
<dbReference type="FunFam" id="3.30.420.150:FF:000003">
    <property type="entry name" value="ectonucleoside triphosphate diphosphohydrolase 7"/>
    <property type="match status" value="1"/>
</dbReference>
<dbReference type="Gene3D" id="3.30.420.40">
    <property type="match status" value="1"/>
</dbReference>
<dbReference type="Gene3D" id="3.30.420.150">
    <property type="entry name" value="Exopolyphosphatase. Domain 2"/>
    <property type="match status" value="1"/>
</dbReference>
<dbReference type="InterPro" id="IPR000407">
    <property type="entry name" value="GDA1_CD39_NTPase"/>
</dbReference>
<dbReference type="PANTHER" id="PTHR11782">
    <property type="entry name" value="ADENOSINE/GUANOSINE DIPHOSPHATASE"/>
    <property type="match status" value="1"/>
</dbReference>
<dbReference type="PANTHER" id="PTHR11782:SF29">
    <property type="entry name" value="ECTONUCLEOSIDE TRIPHOSPHATE DIPHOSPHOHYDROLASE 4"/>
    <property type="match status" value="1"/>
</dbReference>
<dbReference type="Pfam" id="PF01150">
    <property type="entry name" value="GDA1_CD39"/>
    <property type="match status" value="1"/>
</dbReference>
<dbReference type="PROSITE" id="PS01238">
    <property type="entry name" value="GDA1_CD39_NTPASE"/>
    <property type="match status" value="1"/>
</dbReference>
<sequence length="613" mass="69746">MGRIGISCLFPASWHFSISPVGCPRILNTNLRQIVVISILAAAVSLLYFSVVIIRSKYGWLSKDKKFQRYLARVTDVEATDTNNPSVNYGIVVDCGSSGSRIFVYCWPRHNGNPHDLLDIRQMRDKNRKPVVMKIKPGISEFATSPEKVSDYISPLLSFAAEHVPRAKHKETPLYILCTAGMRVLPESQQKAILEDLLTDIPVHYDFLFSDSHAEVISGKQEGVYAWIGINFVLGRFEHIEEDDEAVVEVNIPGSESSEAIVRKRTAGVLDMGGVSTQIAYEVPQTVSFASSQQEEVAKNLLAEFNLGCDVHQTEHVYRVYVATFLGFGGNAARQRYEDRLFASTVQKNRLLGKQTGLTPDAPLLDPCLPLDIKDEIQQNGQTLYLQGTGDFDLCRETLQPFMNKTNETQTSLNGVYQPPIHFQNSEFYGFSEFYYCTEDVLRMGGDYNAARFTQAAKDYCATKWSILRERFDRGLYASHADLHRLKYQCFKSAWMFEVFHKGFSFPVTYKNLKTALQVYDKEVQWTLGAILYRTRFLPLRDIRQEVFRAGHAHWRGVSFVYNHYLFSGCFLVVLLSILLYLLRLRRIHRRAPRTGSLWMEEGLPSQKGPGPL</sequence>
<protein>
    <recommendedName>
        <fullName>Ectonucleoside triphosphate diphosphohydrolase 4</fullName>
        <shortName>NTPDase 4</shortName>
        <ecNumber evidence="2">3.6.1.15</ecNumber>
        <ecNumber evidence="2">3.6.1.6</ecNumber>
    </recommendedName>
    <alternativeName>
        <fullName>Lysosomal apyrase-like protein of 70 kDa</fullName>
    </alternativeName>
    <alternativeName>
        <fullName>Uridine-diphosphatase</fullName>
        <shortName>UDPase</shortName>
        <ecNumber evidence="2">3.6.1.42</ecNumber>
    </alternativeName>
</protein>